<keyword id="KW-1185">Reference proteome</keyword>
<keyword id="KW-0687">Ribonucleoprotein</keyword>
<keyword id="KW-0689">Ribosomal protein</keyword>
<name>RS16_AMOA5</name>
<reference key="1">
    <citation type="journal article" date="2010" name="J. Bacteriol.">
        <title>The genome of the amoeba symbiont 'Candidatus Amoebophilus asiaticus' reveals common mechanisms for host cell interaction among amoeba-associated bacteria.</title>
        <authorList>
            <person name="Schmitz-Esser S."/>
            <person name="Tischler P."/>
            <person name="Arnold R."/>
            <person name="Montanaro J."/>
            <person name="Wagner M."/>
            <person name="Rattei T."/>
            <person name="Horn M."/>
        </authorList>
    </citation>
    <scope>NUCLEOTIDE SEQUENCE [LARGE SCALE GENOMIC DNA]</scope>
    <source>
        <strain>5a2</strain>
    </source>
</reference>
<protein>
    <recommendedName>
        <fullName evidence="1">Small ribosomal subunit protein bS16</fullName>
    </recommendedName>
    <alternativeName>
        <fullName evidence="2">30S ribosomal protein S16</fullName>
    </alternativeName>
</protein>
<feature type="chain" id="PRO_1000196320" description="Small ribosomal subunit protein bS16">
    <location>
        <begin position="1"/>
        <end position="119"/>
    </location>
</feature>
<gene>
    <name evidence="1" type="primary">rpsP</name>
    <name type="ordered locus">Aasi_0109</name>
</gene>
<accession>B3EUD8</accession>
<sequence length="119" mass="13479">MAVKIRLAKKGRKKLALYDIVVADQRAPRDGRFIEKLGNYNPNTNPSTVVLHEDKVIQWLFNGAQPTNTVKNILSSQGILLKRHLQIGVKKGAITQEEADKRFLVWKESKTQKPGKFKA</sequence>
<proteinExistence type="inferred from homology"/>
<comment type="similarity">
    <text evidence="1">Belongs to the bacterial ribosomal protein bS16 family.</text>
</comment>
<evidence type="ECO:0000255" key="1">
    <source>
        <dbReference type="HAMAP-Rule" id="MF_00385"/>
    </source>
</evidence>
<evidence type="ECO:0000305" key="2"/>
<organism>
    <name type="scientific">Amoebophilus asiaticus (strain 5a2)</name>
    <dbReference type="NCBI Taxonomy" id="452471"/>
    <lineage>
        <taxon>Bacteria</taxon>
        <taxon>Pseudomonadati</taxon>
        <taxon>Bacteroidota</taxon>
        <taxon>Cytophagia</taxon>
        <taxon>Cytophagales</taxon>
        <taxon>Amoebophilaceae</taxon>
        <taxon>Candidatus Amoebophilus</taxon>
    </lineage>
</organism>
<dbReference type="EMBL" id="CP001102">
    <property type="protein sequence ID" value="ACE05557.1"/>
    <property type="molecule type" value="Genomic_DNA"/>
</dbReference>
<dbReference type="RefSeq" id="WP_012472327.1">
    <property type="nucleotide sequence ID" value="NC_010830.1"/>
</dbReference>
<dbReference type="SMR" id="B3EUD8"/>
<dbReference type="STRING" id="452471.Aasi_0109"/>
<dbReference type="KEGG" id="aas:Aasi_0109"/>
<dbReference type="eggNOG" id="COG0228">
    <property type="taxonomic scope" value="Bacteria"/>
</dbReference>
<dbReference type="HOGENOM" id="CLU_100590_3_2_10"/>
<dbReference type="OrthoDB" id="9807878at2"/>
<dbReference type="Proteomes" id="UP000001227">
    <property type="component" value="Chromosome"/>
</dbReference>
<dbReference type="GO" id="GO:0005737">
    <property type="term" value="C:cytoplasm"/>
    <property type="evidence" value="ECO:0007669"/>
    <property type="project" value="UniProtKB-ARBA"/>
</dbReference>
<dbReference type="GO" id="GO:0015935">
    <property type="term" value="C:small ribosomal subunit"/>
    <property type="evidence" value="ECO:0007669"/>
    <property type="project" value="TreeGrafter"/>
</dbReference>
<dbReference type="GO" id="GO:0003735">
    <property type="term" value="F:structural constituent of ribosome"/>
    <property type="evidence" value="ECO:0007669"/>
    <property type="project" value="InterPro"/>
</dbReference>
<dbReference type="GO" id="GO:0006412">
    <property type="term" value="P:translation"/>
    <property type="evidence" value="ECO:0007669"/>
    <property type="project" value="UniProtKB-UniRule"/>
</dbReference>
<dbReference type="Gene3D" id="3.30.1320.10">
    <property type="match status" value="1"/>
</dbReference>
<dbReference type="HAMAP" id="MF_00385">
    <property type="entry name" value="Ribosomal_bS16"/>
    <property type="match status" value="1"/>
</dbReference>
<dbReference type="InterPro" id="IPR000307">
    <property type="entry name" value="Ribosomal_bS16"/>
</dbReference>
<dbReference type="InterPro" id="IPR023803">
    <property type="entry name" value="Ribosomal_bS16_dom_sf"/>
</dbReference>
<dbReference type="NCBIfam" id="TIGR00002">
    <property type="entry name" value="S16"/>
    <property type="match status" value="1"/>
</dbReference>
<dbReference type="PANTHER" id="PTHR12919">
    <property type="entry name" value="30S RIBOSOMAL PROTEIN S16"/>
    <property type="match status" value="1"/>
</dbReference>
<dbReference type="PANTHER" id="PTHR12919:SF20">
    <property type="entry name" value="SMALL RIBOSOMAL SUBUNIT PROTEIN BS16M"/>
    <property type="match status" value="1"/>
</dbReference>
<dbReference type="Pfam" id="PF00886">
    <property type="entry name" value="Ribosomal_S16"/>
    <property type="match status" value="1"/>
</dbReference>
<dbReference type="SUPFAM" id="SSF54565">
    <property type="entry name" value="Ribosomal protein S16"/>
    <property type="match status" value="1"/>
</dbReference>